<gene>
    <name evidence="1" type="primary">psd</name>
    <name type="ordered locus">SPOA0292</name>
</gene>
<feature type="chain" id="PRO_0000262269" description="Phosphatidylserine decarboxylase beta chain" evidence="1">
    <location>
        <begin position="1"/>
        <end position="187"/>
    </location>
</feature>
<feature type="chain" id="PRO_0000262270" description="Phosphatidylserine decarboxylase alpha chain" evidence="1">
    <location>
        <begin position="188"/>
        <end position="219"/>
    </location>
</feature>
<feature type="active site" description="Schiff-base intermediate with substrate; via pyruvic acid" evidence="1">
    <location>
        <position position="188"/>
    </location>
</feature>
<feature type="site" description="Cleavage (non-hydrolytic); by autocatalysis" evidence="1">
    <location>
        <begin position="187"/>
        <end position="188"/>
    </location>
</feature>
<feature type="modified residue" description="Pyruvic acid (Ser); by autocatalysis" evidence="1">
    <location>
        <position position="188"/>
    </location>
</feature>
<sequence length="219" mass="24115">MKMRDTFLKPMHPEGRKFVGIFAAITVILFLIWSVLGWIGVGLTVWCYYFFRDPERVTPAREGLIVSPADGIVSMIEKSVPPAELGMPDQALTRISVFMSVFNCHVNRAPIAGRIAAIAYRPGKFFNASLDKASADNERNSLCIEMADGRQIAVVQIAGLVARRIVCFSSTGDTLRTGERFGLIRFGSRLDVYLPEGVEPMVDLGQTMIAGETVLADLQ</sequence>
<reference key="1">
    <citation type="journal article" date="2004" name="Nature">
        <title>Genome sequence of Silicibacter pomeroyi reveals adaptations to the marine environment.</title>
        <authorList>
            <person name="Moran M.A."/>
            <person name="Buchan A."/>
            <person name="Gonzalez J.M."/>
            <person name="Heidelberg J.F."/>
            <person name="Whitman W.B."/>
            <person name="Kiene R.P."/>
            <person name="Henriksen J.R."/>
            <person name="King G.M."/>
            <person name="Belas R."/>
            <person name="Fuqua C."/>
            <person name="Brinkac L.M."/>
            <person name="Lewis M."/>
            <person name="Johri S."/>
            <person name="Weaver B."/>
            <person name="Pai G."/>
            <person name="Eisen J.A."/>
            <person name="Rahe E."/>
            <person name="Sheldon W.M."/>
            <person name="Ye W."/>
            <person name="Miller T.R."/>
            <person name="Carlton J."/>
            <person name="Rasko D.A."/>
            <person name="Paulsen I.T."/>
            <person name="Ren Q."/>
            <person name="Daugherty S.C."/>
            <person name="DeBoy R.T."/>
            <person name="Dodson R.J."/>
            <person name="Durkin A.S."/>
            <person name="Madupu R."/>
            <person name="Nelson W.C."/>
            <person name="Sullivan S.A."/>
            <person name="Rosovitz M.J."/>
            <person name="Haft D.H."/>
            <person name="Selengut J."/>
            <person name="Ward N."/>
        </authorList>
    </citation>
    <scope>NUCLEOTIDE SEQUENCE [LARGE SCALE GENOMIC DNA]</scope>
    <source>
        <strain>ATCC 700808 / DSM 15171 / DSS-3</strain>
    </source>
</reference>
<reference key="2">
    <citation type="journal article" date="2014" name="Stand. Genomic Sci.">
        <title>An updated genome annotation for the model marine bacterium Ruegeria pomeroyi DSS-3.</title>
        <authorList>
            <person name="Rivers A.R."/>
            <person name="Smith C.B."/>
            <person name="Moran M.A."/>
        </authorList>
    </citation>
    <scope>GENOME REANNOTATION</scope>
    <source>
        <strain>ATCC 700808 / DSM 15171 / DSS-3</strain>
    </source>
</reference>
<name>PSD_RUEPO</name>
<organism>
    <name type="scientific">Ruegeria pomeroyi (strain ATCC 700808 / DSM 15171 / DSS-3)</name>
    <name type="common">Silicibacter pomeroyi</name>
    <dbReference type="NCBI Taxonomy" id="246200"/>
    <lineage>
        <taxon>Bacteria</taxon>
        <taxon>Pseudomonadati</taxon>
        <taxon>Pseudomonadota</taxon>
        <taxon>Alphaproteobacteria</taxon>
        <taxon>Rhodobacterales</taxon>
        <taxon>Roseobacteraceae</taxon>
        <taxon>Ruegeria</taxon>
    </lineage>
</organism>
<dbReference type="EC" id="4.1.1.65" evidence="1"/>
<dbReference type="EMBL" id="CP000032">
    <property type="protein sequence ID" value="AAV97426.1"/>
    <property type="molecule type" value="Genomic_DNA"/>
</dbReference>
<dbReference type="RefSeq" id="WP_011242071.1">
    <property type="nucleotide sequence ID" value="NC_006569.1"/>
</dbReference>
<dbReference type="PaxDb" id="246200-SPOA0292"/>
<dbReference type="KEGG" id="sil:SPOA0292"/>
<dbReference type="eggNOG" id="COG0688">
    <property type="taxonomic scope" value="Bacteria"/>
</dbReference>
<dbReference type="HOGENOM" id="CLU_072492_0_0_5"/>
<dbReference type="OrthoDB" id="9790893at2"/>
<dbReference type="UniPathway" id="UPA00558">
    <property type="reaction ID" value="UER00616"/>
</dbReference>
<dbReference type="Proteomes" id="UP000001023">
    <property type="component" value="Plasmid megaplasmid"/>
</dbReference>
<dbReference type="GO" id="GO:0005886">
    <property type="term" value="C:plasma membrane"/>
    <property type="evidence" value="ECO:0007669"/>
    <property type="project" value="UniProtKB-SubCell"/>
</dbReference>
<dbReference type="GO" id="GO:0004609">
    <property type="term" value="F:phosphatidylserine decarboxylase activity"/>
    <property type="evidence" value="ECO:0007669"/>
    <property type="project" value="UniProtKB-UniRule"/>
</dbReference>
<dbReference type="GO" id="GO:0006646">
    <property type="term" value="P:phosphatidylethanolamine biosynthetic process"/>
    <property type="evidence" value="ECO:0007669"/>
    <property type="project" value="UniProtKB-UniRule"/>
</dbReference>
<dbReference type="HAMAP" id="MF_00664">
    <property type="entry name" value="PS_decarb_PSD_A"/>
    <property type="match status" value="1"/>
</dbReference>
<dbReference type="InterPro" id="IPR003817">
    <property type="entry name" value="PS_Dcarbxylase"/>
</dbReference>
<dbReference type="InterPro" id="IPR033175">
    <property type="entry name" value="PSD-A"/>
</dbReference>
<dbReference type="NCBIfam" id="NF003677">
    <property type="entry name" value="PRK05305.1-1"/>
    <property type="match status" value="1"/>
</dbReference>
<dbReference type="NCBIfam" id="NF003678">
    <property type="entry name" value="PRK05305.1-2"/>
    <property type="match status" value="1"/>
</dbReference>
<dbReference type="NCBIfam" id="NF003679">
    <property type="entry name" value="PRK05305.1-3"/>
    <property type="match status" value="1"/>
</dbReference>
<dbReference type="NCBIfam" id="NF003685">
    <property type="entry name" value="PRK05305.2-5"/>
    <property type="match status" value="1"/>
</dbReference>
<dbReference type="PANTHER" id="PTHR35809">
    <property type="entry name" value="ARCHAETIDYLSERINE DECARBOXYLASE PROENZYME-RELATED"/>
    <property type="match status" value="1"/>
</dbReference>
<dbReference type="PANTHER" id="PTHR35809:SF1">
    <property type="entry name" value="ARCHAETIDYLSERINE DECARBOXYLASE PROENZYME-RELATED"/>
    <property type="match status" value="1"/>
</dbReference>
<dbReference type="Pfam" id="PF02666">
    <property type="entry name" value="PS_Dcarbxylase"/>
    <property type="match status" value="1"/>
</dbReference>
<comment type="function">
    <text evidence="1">Catalyzes the formation of phosphatidylethanolamine (PtdEtn) from phosphatidylserine (PtdSer).</text>
</comment>
<comment type="catalytic activity">
    <reaction evidence="1">
        <text>a 1,2-diacyl-sn-glycero-3-phospho-L-serine + H(+) = a 1,2-diacyl-sn-glycero-3-phosphoethanolamine + CO2</text>
        <dbReference type="Rhea" id="RHEA:20828"/>
        <dbReference type="ChEBI" id="CHEBI:15378"/>
        <dbReference type="ChEBI" id="CHEBI:16526"/>
        <dbReference type="ChEBI" id="CHEBI:57262"/>
        <dbReference type="ChEBI" id="CHEBI:64612"/>
        <dbReference type="EC" id="4.1.1.65"/>
    </reaction>
</comment>
<comment type="cofactor">
    <cofactor evidence="1">
        <name>pyruvate</name>
        <dbReference type="ChEBI" id="CHEBI:15361"/>
    </cofactor>
    <text evidence="1">Binds 1 pyruvoyl group covalently per subunit.</text>
</comment>
<comment type="pathway">
    <text evidence="1">Phospholipid metabolism; phosphatidylethanolamine biosynthesis; phosphatidylethanolamine from CDP-diacylglycerol: step 2/2.</text>
</comment>
<comment type="subunit">
    <text evidence="1">Heterodimer of a large membrane-associated beta subunit and a small pyruvoyl-containing alpha subunit.</text>
</comment>
<comment type="subcellular location">
    <subcellularLocation>
        <location evidence="1">Cell membrane</location>
        <topology evidence="1">Peripheral membrane protein</topology>
    </subcellularLocation>
</comment>
<comment type="PTM">
    <text evidence="1">Is synthesized initially as an inactive proenzyme. Formation of the active enzyme involves a self-maturation process in which the active site pyruvoyl group is generated from an internal serine residue via an autocatalytic post-translational modification. Two non-identical subunits are generated from the proenzyme in this reaction, and the pyruvate is formed at the N-terminus of the alpha chain, which is derived from the carboxyl end of the proenzyme. The post-translation cleavage follows an unusual pathway, termed non-hydrolytic serinolysis, in which the side chain hydroxyl group of the serine supplies its oxygen atom to form the C-terminus of the beta chain, while the remainder of the serine residue undergoes an oxidative deamination to produce ammonia and the pyruvoyl prosthetic group on the alpha chain.</text>
</comment>
<comment type="similarity">
    <text evidence="1">Belongs to the phosphatidylserine decarboxylase family. PSD-A subfamily.</text>
</comment>
<keyword id="KW-1003">Cell membrane</keyword>
<keyword id="KW-0210">Decarboxylase</keyword>
<keyword id="KW-0444">Lipid biosynthesis</keyword>
<keyword id="KW-0443">Lipid metabolism</keyword>
<keyword id="KW-0456">Lyase</keyword>
<keyword id="KW-0472">Membrane</keyword>
<keyword id="KW-0594">Phospholipid biosynthesis</keyword>
<keyword id="KW-1208">Phospholipid metabolism</keyword>
<keyword id="KW-0614">Plasmid</keyword>
<keyword id="KW-0670">Pyruvate</keyword>
<keyword id="KW-1185">Reference proteome</keyword>
<keyword id="KW-0865">Zymogen</keyword>
<evidence type="ECO:0000255" key="1">
    <source>
        <dbReference type="HAMAP-Rule" id="MF_00664"/>
    </source>
</evidence>
<accession>Q5LKT7</accession>
<geneLocation type="plasmid">
    <name>megaplasmid Spo</name>
</geneLocation>
<proteinExistence type="inferred from homology"/>
<protein>
    <recommendedName>
        <fullName evidence="1">Phosphatidylserine decarboxylase proenzyme</fullName>
        <ecNumber evidence="1">4.1.1.65</ecNumber>
    </recommendedName>
    <component>
        <recommendedName>
            <fullName evidence="1">Phosphatidylserine decarboxylase alpha chain</fullName>
        </recommendedName>
    </component>
    <component>
        <recommendedName>
            <fullName evidence="1">Phosphatidylserine decarboxylase beta chain</fullName>
        </recommendedName>
    </component>
</protein>